<protein>
    <recommendedName>
        <fullName evidence="1">Protein ApaG</fullName>
    </recommendedName>
</protein>
<sequence>MINSPRVCIQVQSVYIEAQSSPDNERYVFAYTVTIRNLGRAPVQLLGRYWLITNGNGRETEVQGEGVVGVQPLIAPGEEYQYTSGAIIETPLGTMQGHYEMIDENGVPFSIDIPVFRLAVPTLIH</sequence>
<organism>
    <name type="scientific">Escherichia coli O157:H7 (strain EC4115 / EHEC)</name>
    <dbReference type="NCBI Taxonomy" id="444450"/>
    <lineage>
        <taxon>Bacteria</taxon>
        <taxon>Pseudomonadati</taxon>
        <taxon>Pseudomonadota</taxon>
        <taxon>Gammaproteobacteria</taxon>
        <taxon>Enterobacterales</taxon>
        <taxon>Enterobacteriaceae</taxon>
        <taxon>Escherichia</taxon>
    </lineage>
</organism>
<gene>
    <name evidence="1" type="primary">apaG</name>
    <name type="ordered locus">ECH74115_0056</name>
</gene>
<name>APAG_ECO5E</name>
<evidence type="ECO:0000255" key="1">
    <source>
        <dbReference type="HAMAP-Rule" id="MF_00791"/>
    </source>
</evidence>
<accession>B5YZ88</accession>
<dbReference type="EMBL" id="CP001164">
    <property type="protein sequence ID" value="ACI37157.1"/>
    <property type="molecule type" value="Genomic_DNA"/>
</dbReference>
<dbReference type="RefSeq" id="WP_000610901.1">
    <property type="nucleotide sequence ID" value="NC_011353.1"/>
</dbReference>
<dbReference type="SMR" id="B5YZ88"/>
<dbReference type="GeneID" id="93777385"/>
<dbReference type="KEGG" id="ecf:ECH74115_0056"/>
<dbReference type="HOGENOM" id="CLU_128074_0_0_6"/>
<dbReference type="GO" id="GO:0070987">
    <property type="term" value="P:error-free translesion synthesis"/>
    <property type="evidence" value="ECO:0007669"/>
    <property type="project" value="TreeGrafter"/>
</dbReference>
<dbReference type="Gene3D" id="2.60.40.1470">
    <property type="entry name" value="ApaG domain"/>
    <property type="match status" value="1"/>
</dbReference>
<dbReference type="HAMAP" id="MF_00791">
    <property type="entry name" value="ApaG"/>
    <property type="match status" value="1"/>
</dbReference>
<dbReference type="InterPro" id="IPR007474">
    <property type="entry name" value="ApaG_domain"/>
</dbReference>
<dbReference type="InterPro" id="IPR036767">
    <property type="entry name" value="ApaG_sf"/>
</dbReference>
<dbReference type="InterPro" id="IPR023065">
    <property type="entry name" value="Uncharacterised_ApaG"/>
</dbReference>
<dbReference type="NCBIfam" id="NF003967">
    <property type="entry name" value="PRK05461.1"/>
    <property type="match status" value="1"/>
</dbReference>
<dbReference type="PANTHER" id="PTHR14289">
    <property type="entry name" value="F-BOX ONLY PROTEIN 3"/>
    <property type="match status" value="1"/>
</dbReference>
<dbReference type="PANTHER" id="PTHR14289:SF16">
    <property type="entry name" value="POLYMERASE DELTA-INTERACTING PROTEIN 2"/>
    <property type="match status" value="1"/>
</dbReference>
<dbReference type="Pfam" id="PF04379">
    <property type="entry name" value="DUF525"/>
    <property type="match status" value="1"/>
</dbReference>
<dbReference type="SUPFAM" id="SSF110069">
    <property type="entry name" value="ApaG-like"/>
    <property type="match status" value="1"/>
</dbReference>
<dbReference type="PROSITE" id="PS51087">
    <property type="entry name" value="APAG"/>
    <property type="match status" value="1"/>
</dbReference>
<proteinExistence type="inferred from homology"/>
<feature type="chain" id="PRO_1000133784" description="Protein ApaG">
    <location>
        <begin position="1"/>
        <end position="125"/>
    </location>
</feature>
<feature type="domain" description="ApaG" evidence="1">
    <location>
        <begin position="1"/>
        <end position="125"/>
    </location>
</feature>
<reference key="1">
    <citation type="journal article" date="2011" name="Proc. Natl. Acad. Sci. U.S.A.">
        <title>Genomic anatomy of Escherichia coli O157:H7 outbreaks.</title>
        <authorList>
            <person name="Eppinger M."/>
            <person name="Mammel M.K."/>
            <person name="Leclerc J.E."/>
            <person name="Ravel J."/>
            <person name="Cebula T.A."/>
        </authorList>
    </citation>
    <scope>NUCLEOTIDE SEQUENCE [LARGE SCALE GENOMIC DNA]</scope>
    <source>
        <strain>EC4115 / EHEC</strain>
    </source>
</reference>